<comment type="function">
    <text evidence="1">This is one of the proteins that binds to the 5S RNA in the ribosome where it forms part of the central protuberance.</text>
</comment>
<comment type="subunit">
    <text evidence="1">Part of the 50S ribosomal subunit; part of the 5S rRNA/L5/L18/L25 subcomplex. Contacts the 5S rRNA. Binds to the 5S rRNA independently of L5 and L18.</text>
</comment>
<comment type="similarity">
    <text evidence="1">Belongs to the bacterial ribosomal protein bL25 family. CTC subfamily.</text>
</comment>
<dbReference type="EMBL" id="CP000323">
    <property type="protein sequence ID" value="ABE73968.1"/>
    <property type="molecule type" value="Genomic_DNA"/>
</dbReference>
<dbReference type="RefSeq" id="WP_011512557.1">
    <property type="nucleotide sequence ID" value="NC_007969.1"/>
</dbReference>
<dbReference type="SMR" id="Q1QED5"/>
<dbReference type="STRING" id="335284.Pcryo_0184"/>
<dbReference type="KEGG" id="pcr:Pcryo_0184"/>
<dbReference type="eggNOG" id="COG1825">
    <property type="taxonomic scope" value="Bacteria"/>
</dbReference>
<dbReference type="HOGENOM" id="CLU_075939_0_1_6"/>
<dbReference type="Proteomes" id="UP000002425">
    <property type="component" value="Chromosome"/>
</dbReference>
<dbReference type="GO" id="GO:0022625">
    <property type="term" value="C:cytosolic large ribosomal subunit"/>
    <property type="evidence" value="ECO:0007669"/>
    <property type="project" value="TreeGrafter"/>
</dbReference>
<dbReference type="GO" id="GO:0008097">
    <property type="term" value="F:5S rRNA binding"/>
    <property type="evidence" value="ECO:0007669"/>
    <property type="project" value="InterPro"/>
</dbReference>
<dbReference type="GO" id="GO:0003735">
    <property type="term" value="F:structural constituent of ribosome"/>
    <property type="evidence" value="ECO:0007669"/>
    <property type="project" value="InterPro"/>
</dbReference>
<dbReference type="GO" id="GO:0006412">
    <property type="term" value="P:translation"/>
    <property type="evidence" value="ECO:0007669"/>
    <property type="project" value="UniProtKB-UniRule"/>
</dbReference>
<dbReference type="CDD" id="cd00495">
    <property type="entry name" value="Ribosomal_L25_TL5_CTC"/>
    <property type="match status" value="1"/>
</dbReference>
<dbReference type="Gene3D" id="2.170.120.20">
    <property type="entry name" value="Ribosomal protein L25, beta domain"/>
    <property type="match status" value="1"/>
</dbReference>
<dbReference type="Gene3D" id="2.40.240.10">
    <property type="entry name" value="Ribosomal Protein L25, Chain P"/>
    <property type="match status" value="1"/>
</dbReference>
<dbReference type="HAMAP" id="MF_01336">
    <property type="entry name" value="Ribosomal_bL25"/>
    <property type="match status" value="1"/>
</dbReference>
<dbReference type="HAMAP" id="MF_01334">
    <property type="entry name" value="Ribosomal_bL25_CTC"/>
    <property type="match status" value="1"/>
</dbReference>
<dbReference type="InterPro" id="IPR020056">
    <property type="entry name" value="Rbsml_bL25/Gln-tRNA_synth_N"/>
</dbReference>
<dbReference type="InterPro" id="IPR011035">
    <property type="entry name" value="Ribosomal_bL25/Gln-tRNA_synth"/>
</dbReference>
<dbReference type="InterPro" id="IPR020057">
    <property type="entry name" value="Ribosomal_bL25_b-dom"/>
</dbReference>
<dbReference type="InterPro" id="IPR037121">
    <property type="entry name" value="Ribosomal_bL25_C"/>
</dbReference>
<dbReference type="InterPro" id="IPR001021">
    <property type="entry name" value="Ribosomal_bL25_long"/>
</dbReference>
<dbReference type="InterPro" id="IPR020055">
    <property type="entry name" value="Ribosomal_bL25_short"/>
</dbReference>
<dbReference type="InterPro" id="IPR029751">
    <property type="entry name" value="Ribosomal_L25_dom"/>
</dbReference>
<dbReference type="InterPro" id="IPR020930">
    <property type="entry name" value="Ribosomal_uL5_bac-type"/>
</dbReference>
<dbReference type="NCBIfam" id="TIGR00731">
    <property type="entry name" value="bL25_bact_ctc"/>
    <property type="match status" value="1"/>
</dbReference>
<dbReference type="NCBIfam" id="NF004128">
    <property type="entry name" value="PRK05618.1-2"/>
    <property type="match status" value="1"/>
</dbReference>
<dbReference type="NCBIfam" id="NF004130">
    <property type="entry name" value="PRK05618.1-5"/>
    <property type="match status" value="1"/>
</dbReference>
<dbReference type="NCBIfam" id="NF004612">
    <property type="entry name" value="PRK05943.1"/>
    <property type="match status" value="1"/>
</dbReference>
<dbReference type="PANTHER" id="PTHR33284">
    <property type="entry name" value="RIBOSOMAL PROTEIN L25/GLN-TRNA SYNTHETASE, ANTI-CODON-BINDING DOMAIN-CONTAINING PROTEIN"/>
    <property type="match status" value="1"/>
</dbReference>
<dbReference type="PANTHER" id="PTHR33284:SF1">
    <property type="entry name" value="RIBOSOMAL PROTEIN L25_GLN-TRNA SYNTHETASE, ANTI-CODON-BINDING DOMAIN-CONTAINING PROTEIN"/>
    <property type="match status" value="1"/>
</dbReference>
<dbReference type="Pfam" id="PF01386">
    <property type="entry name" value="Ribosomal_L25p"/>
    <property type="match status" value="1"/>
</dbReference>
<dbReference type="Pfam" id="PF14693">
    <property type="entry name" value="Ribosomal_TL5_C"/>
    <property type="match status" value="1"/>
</dbReference>
<dbReference type="SUPFAM" id="SSF50715">
    <property type="entry name" value="Ribosomal protein L25-like"/>
    <property type="match status" value="1"/>
</dbReference>
<accession>Q1QED5</accession>
<reference key="1">
    <citation type="submission" date="2006-03" db="EMBL/GenBank/DDBJ databases">
        <title>Complete sequence of chromosome of Psychrobacter cryohalolentis K5.</title>
        <authorList>
            <consortium name="US DOE Joint Genome Institute"/>
            <person name="Copeland A."/>
            <person name="Lucas S."/>
            <person name="Lapidus A."/>
            <person name="Barry K."/>
            <person name="Detter J.C."/>
            <person name="Glavina T."/>
            <person name="Hammon N."/>
            <person name="Israni S."/>
            <person name="Dalin E."/>
            <person name="Tice H."/>
            <person name="Pitluck S."/>
            <person name="Brettin T."/>
            <person name="Bruce D."/>
            <person name="Han C."/>
            <person name="Tapia R."/>
            <person name="Sims D.R."/>
            <person name="Gilna P."/>
            <person name="Schmutz J."/>
            <person name="Larimer F."/>
            <person name="Land M."/>
            <person name="Hauser L."/>
            <person name="Kyrpides N."/>
            <person name="Kim E."/>
            <person name="Richardson P."/>
        </authorList>
    </citation>
    <scope>NUCLEOTIDE SEQUENCE [LARGE SCALE GENOMIC DNA]</scope>
    <source>
        <strain>ATCC BAA-1226 / DSM 17306 / VKM B-2378 / K5</strain>
    </source>
</reference>
<organism>
    <name type="scientific">Psychrobacter cryohalolentis (strain ATCC BAA-1226 / DSM 17306 / VKM B-2378 / K5)</name>
    <dbReference type="NCBI Taxonomy" id="335284"/>
    <lineage>
        <taxon>Bacteria</taxon>
        <taxon>Pseudomonadati</taxon>
        <taxon>Pseudomonadota</taxon>
        <taxon>Gammaproteobacteria</taxon>
        <taxon>Moraxellales</taxon>
        <taxon>Moraxellaceae</taxon>
        <taxon>Psychrobacter</taxon>
    </lineage>
</organism>
<proteinExistence type="inferred from homology"/>
<protein>
    <recommendedName>
        <fullName evidence="1">Large ribosomal subunit protein bL25</fullName>
    </recommendedName>
    <alternativeName>
        <fullName evidence="3">50S ribosomal protein L25</fullName>
    </alternativeName>
    <alternativeName>
        <fullName evidence="1">General stress protein CTC</fullName>
    </alternativeName>
</protein>
<feature type="chain" id="PRO_0000244231" description="Large ribosomal subunit protein bL25">
    <location>
        <begin position="1"/>
        <end position="224"/>
    </location>
</feature>
<feature type="region of interest" description="Disordered" evidence="2">
    <location>
        <begin position="195"/>
        <end position="224"/>
    </location>
</feature>
<feature type="compositionally biased region" description="Acidic residues" evidence="2">
    <location>
        <begin position="197"/>
        <end position="207"/>
    </location>
</feature>
<gene>
    <name evidence="1" type="primary">rplY</name>
    <name evidence="1" type="synonym">ctc</name>
    <name type="ordered locus">Pcryo_0184</name>
</gene>
<keyword id="KW-0687">Ribonucleoprotein</keyword>
<keyword id="KW-0689">Ribosomal protein</keyword>
<keyword id="KW-0694">RNA-binding</keyword>
<keyword id="KW-0699">rRNA-binding</keyword>
<name>RL25_PSYCK</name>
<sequence length="224" mass="24461">MTINHFALNAVDRSAELQGKGASRRLRKQNLVPAIIYGGGEQPTAISIKINELVKSLEFEAFFSHILTLNVDGEEHQVVIKDLQRHPAKGFPMHADFQRVVKGQKINMNVPVHFSGREEAPGTKAGGVLSTLVTDIEIVCIPSQLPEYLEIDVSGMEIGDLFRLSDITLPEGVVIAELELEDGHDRTIVNMQPPTVEEVDEAAEVDAADVPATEQGTDESKDGE</sequence>
<evidence type="ECO:0000255" key="1">
    <source>
        <dbReference type="HAMAP-Rule" id="MF_01334"/>
    </source>
</evidence>
<evidence type="ECO:0000256" key="2">
    <source>
        <dbReference type="SAM" id="MobiDB-lite"/>
    </source>
</evidence>
<evidence type="ECO:0000305" key="3"/>